<gene>
    <name type="primary">fhbB</name>
    <name type="ORF">DDB_G0292380</name>
</gene>
<sequence length="423" mass="48206">MLSQKSIQIIKSTVPLLEKYGVEITSLFYKNMFEAQPQFLNIFNHSNQRNQKQPVALANTILQSAIHIEKLNEINLMPIVHKHVALGITPEMYPIVGAHLLGAMKTVMQDEATPEIMAAWTEAYRAVAQAFMDAEEDLYFETEEQIGGWKDTREFVVDRIEEETPLIKSFYFKAYDGKEIATYIPGQYITVKITLPGDGVDVPTDKMRTYVRHYSLSDKPNDEYYRISIKKELGKNTPNGIVSNHFHNNIKVGDVVPMSVPAGDFVVNNDSETPILLICGGVGINPLFSMLKETLVQQPDRKINFIFSTHCESSQPFKEELKQLEDDYKETGNLKINLVYSENQGHINKEIIEKYSTQHVDQAEIAETDVYICGPVPFMMQVNKDLLQLGFHKENVHYELFGPLTPVLEENQMLRGVKNIIEN</sequence>
<organism>
    <name type="scientific">Dictyostelium discoideum</name>
    <name type="common">Social amoeba</name>
    <dbReference type="NCBI Taxonomy" id="44689"/>
    <lineage>
        <taxon>Eukaryota</taxon>
        <taxon>Amoebozoa</taxon>
        <taxon>Evosea</taxon>
        <taxon>Eumycetozoa</taxon>
        <taxon>Dictyostelia</taxon>
        <taxon>Dictyosteliales</taxon>
        <taxon>Dictyosteliaceae</taxon>
        <taxon>Dictyostelium</taxon>
    </lineage>
</organism>
<evidence type="ECO:0000250" key="1"/>
<evidence type="ECO:0000255" key="2">
    <source>
        <dbReference type="PROSITE-ProRule" id="PRU00238"/>
    </source>
</evidence>
<evidence type="ECO:0000255" key="3">
    <source>
        <dbReference type="PROSITE-ProRule" id="PRU00716"/>
    </source>
</evidence>
<evidence type="ECO:0000269" key="4">
    <source>
    </source>
</evidence>
<evidence type="ECO:0000305" key="5"/>
<protein>
    <recommendedName>
        <fullName>Flavohemoprotein B</fullName>
        <ecNumber>1.14.12.17</ecNumber>
    </recommendedName>
    <alternativeName>
        <fullName>DdFHb</fullName>
    </alternativeName>
    <alternativeName>
        <fullName>Flavohemoglobin B</fullName>
    </alternativeName>
    <alternativeName>
        <fullName>Hemoglobin-like protein B</fullName>
    </alternativeName>
    <alternativeName>
        <fullName>Nitric oxide dioxygenase B</fullName>
        <shortName>NO oxygenase B</shortName>
        <shortName>NOD B</shortName>
    </alternativeName>
</protein>
<comment type="function">
    <text evidence="4">Is involved in NO detoxification in an aerobic process, termed nitric oxide dioxygenase (NOD) reaction that utilizes O(2) and NAD(P)H to convert NO to nitrate, which protects the cell from various noxious nitrogen compounds. Therefore, plays a central role in the inducible response to nitrosative stress.</text>
</comment>
<comment type="function">
    <text evidence="1">In the presence of oxygen and NADH, it has NADH oxidase activity, which leads to the generation of superoxide and H(2)O(2). Under anaerobic conditions, it also exhibits nitric oxide reductase and FAD reductase activities. However, all these reactions are much lower than NOD activity (By similarity).</text>
</comment>
<comment type="catalytic activity">
    <reaction>
        <text>2 nitric oxide + NADPH + 2 O2 = 2 nitrate + NADP(+) + H(+)</text>
        <dbReference type="Rhea" id="RHEA:19465"/>
        <dbReference type="ChEBI" id="CHEBI:15378"/>
        <dbReference type="ChEBI" id="CHEBI:15379"/>
        <dbReference type="ChEBI" id="CHEBI:16480"/>
        <dbReference type="ChEBI" id="CHEBI:17632"/>
        <dbReference type="ChEBI" id="CHEBI:57783"/>
        <dbReference type="ChEBI" id="CHEBI:58349"/>
        <dbReference type="EC" id="1.14.12.17"/>
    </reaction>
</comment>
<comment type="catalytic activity">
    <reaction>
        <text>2 nitric oxide + NADH + 2 O2 = 2 nitrate + NAD(+) + H(+)</text>
        <dbReference type="Rhea" id="RHEA:19469"/>
        <dbReference type="ChEBI" id="CHEBI:15378"/>
        <dbReference type="ChEBI" id="CHEBI:15379"/>
        <dbReference type="ChEBI" id="CHEBI:16480"/>
        <dbReference type="ChEBI" id="CHEBI:17632"/>
        <dbReference type="ChEBI" id="CHEBI:57540"/>
        <dbReference type="ChEBI" id="CHEBI:57945"/>
        <dbReference type="EC" id="1.14.12.17"/>
    </reaction>
</comment>
<comment type="cofactor">
    <cofactor evidence="1">
        <name>FAD</name>
        <dbReference type="ChEBI" id="CHEBI:57692"/>
    </cofactor>
    <text evidence="1">Binds 1 FAD per subunit.</text>
</comment>
<comment type="cofactor">
    <cofactor evidence="1">
        <name>heme b</name>
        <dbReference type="ChEBI" id="CHEBI:60344"/>
    </cofactor>
    <text evidence="1">Binds 1 heme b group per subunit.</text>
</comment>
<comment type="subcellular location">
    <subcellularLocation>
        <location evidence="1">Cytoplasm</location>
    </subcellularLocation>
</comment>
<comment type="developmental stage">
    <text evidence="4">Accumulates in macrocysts.</text>
</comment>
<comment type="induction">
    <text evidence="4">By submerged conditions, in growing cells.</text>
</comment>
<comment type="domain">
    <text>Consists of two distinct domains; a N-terminal heme-containing oxygen-binding domain and a C-terminal reductase domain with binding sites for FAD and NAD(P)H.</text>
</comment>
<comment type="similarity">
    <text evidence="2">Belongs to the globin family. Two-domain flavohemoproteins subfamily.</text>
</comment>
<comment type="similarity">
    <text evidence="5">In the C-terminal section; belongs to the flavoprotein pyridine nucleotide cytochrome reductase family.</text>
</comment>
<proteinExistence type="evidence at protein level"/>
<feature type="chain" id="PRO_0000327850" description="Flavohemoprotein B">
    <location>
        <begin position="1"/>
        <end position="423"/>
    </location>
</feature>
<feature type="domain" description="Globin" evidence="2">
    <location>
        <begin position="1"/>
        <end position="136"/>
    </location>
</feature>
<feature type="domain" description="FAD-binding FR-type" evidence="3">
    <location>
        <begin position="150"/>
        <end position="268"/>
    </location>
</feature>
<feature type="region of interest" description="Reductase" evidence="1">
    <location>
        <begin position="149"/>
        <end position="423"/>
    </location>
</feature>
<feature type="active site" description="Charge relay system" evidence="1">
    <location>
        <position position="93"/>
    </location>
</feature>
<feature type="active site" description="Charge relay system" evidence="1">
    <location>
        <position position="135"/>
    </location>
</feature>
<feature type="binding site" description="proximal binding residue" evidence="2">
    <location>
        <position position="83"/>
    </location>
    <ligand>
        <name>heme b</name>
        <dbReference type="ChEBI" id="CHEBI:60344"/>
    </ligand>
    <ligandPart>
        <name>Fe</name>
        <dbReference type="ChEBI" id="CHEBI:18248"/>
    </ligandPart>
</feature>
<feature type="binding site" evidence="1">
    <location>
        <position position="188"/>
    </location>
    <ligand>
        <name>FAD</name>
        <dbReference type="ChEBI" id="CHEBI:57692"/>
    </ligand>
</feature>
<feature type="binding site" evidence="1">
    <location>
        <begin position="212"/>
        <end position="215"/>
    </location>
    <ligand>
        <name>FAD</name>
        <dbReference type="ChEBI" id="CHEBI:57692"/>
    </ligand>
</feature>
<feature type="binding site" evidence="1">
    <location>
        <begin position="281"/>
        <end position="286"/>
    </location>
    <ligand>
        <name>NADP(+)</name>
        <dbReference type="ChEBI" id="CHEBI:58349"/>
    </ligand>
</feature>
<feature type="binding site" evidence="1">
    <location>
        <begin position="400"/>
        <end position="403"/>
    </location>
    <ligand>
        <name>FAD</name>
        <dbReference type="ChEBI" id="CHEBI:57692"/>
    </ligand>
</feature>
<feature type="site" description="Involved in heme-bound ligand stabilization and O-O bond activation" evidence="1">
    <location>
        <position position="29"/>
    </location>
</feature>
<feature type="site" description="Influences the redox potential of the prosthetic heme and FAD groups" evidence="1">
    <location>
        <position position="82"/>
    </location>
</feature>
<feature type="site" description="Influences the redox potential of the prosthetic heme and FAD groups" evidence="1">
    <location>
        <position position="399"/>
    </location>
</feature>
<feature type="sequence conflict" description="In Ref. 1; BAA83811." evidence="5" ref="1">
    <original>A</original>
    <variation>D</variation>
    <location>
        <position position="366"/>
    </location>
</feature>
<accession>Q54D73</accession>
<accession>Q9UAG6</accession>
<dbReference type="EC" id="1.14.12.17"/>
<dbReference type="EMBL" id="AB025584">
    <property type="protein sequence ID" value="BAA83811.1"/>
    <property type="molecule type" value="mRNA"/>
</dbReference>
<dbReference type="EMBL" id="AAFI02000190">
    <property type="protein sequence ID" value="EAL61169.1"/>
    <property type="molecule type" value="Genomic_DNA"/>
</dbReference>
<dbReference type="RefSeq" id="XP_629623.1">
    <property type="nucleotide sequence ID" value="XM_629621.1"/>
</dbReference>
<dbReference type="SMR" id="Q54D73"/>
<dbReference type="FunCoup" id="Q54D73">
    <property type="interactions" value="40"/>
</dbReference>
<dbReference type="STRING" id="44689.Q54D73"/>
<dbReference type="PaxDb" id="44689-DDB0191088"/>
<dbReference type="EnsemblProtists" id="EAL61169">
    <property type="protein sequence ID" value="EAL61169"/>
    <property type="gene ID" value="DDB_G0292380"/>
</dbReference>
<dbReference type="GeneID" id="8628686"/>
<dbReference type="KEGG" id="ddi:DDB_G0292380"/>
<dbReference type="dictyBase" id="DDB_G0292380">
    <property type="gene designation" value="fhbB"/>
</dbReference>
<dbReference type="VEuPathDB" id="AmoebaDB:DDB_G0292380"/>
<dbReference type="eggNOG" id="KOG3378">
    <property type="taxonomic scope" value="Eukaryota"/>
</dbReference>
<dbReference type="HOGENOM" id="CLU_003827_12_0_1"/>
<dbReference type="InParanoid" id="Q54D73"/>
<dbReference type="OMA" id="EICAAWG"/>
<dbReference type="PhylomeDB" id="Q54D73"/>
<dbReference type="PRO" id="PR:Q54D73"/>
<dbReference type="Proteomes" id="UP000002195">
    <property type="component" value="Chromosome 6"/>
</dbReference>
<dbReference type="GO" id="GO:0005737">
    <property type="term" value="C:cytoplasm"/>
    <property type="evidence" value="ECO:0000318"/>
    <property type="project" value="GO_Central"/>
</dbReference>
<dbReference type="GO" id="GO:0045335">
    <property type="term" value="C:phagocytic vesicle"/>
    <property type="evidence" value="ECO:0007005"/>
    <property type="project" value="dictyBase"/>
</dbReference>
<dbReference type="GO" id="GO:0071949">
    <property type="term" value="F:FAD binding"/>
    <property type="evidence" value="ECO:0000318"/>
    <property type="project" value="GO_Central"/>
</dbReference>
<dbReference type="GO" id="GO:0020037">
    <property type="term" value="F:heme binding"/>
    <property type="evidence" value="ECO:0007669"/>
    <property type="project" value="InterPro"/>
</dbReference>
<dbReference type="GO" id="GO:0046872">
    <property type="term" value="F:metal ion binding"/>
    <property type="evidence" value="ECO:0007669"/>
    <property type="project" value="UniProtKB-KW"/>
</dbReference>
<dbReference type="GO" id="GO:0008941">
    <property type="term" value="F:nitric oxide dioxygenase NAD(P)H activity"/>
    <property type="evidence" value="ECO:0000318"/>
    <property type="project" value="GO_Central"/>
</dbReference>
<dbReference type="GO" id="GO:0019825">
    <property type="term" value="F:oxygen binding"/>
    <property type="evidence" value="ECO:0007669"/>
    <property type="project" value="InterPro"/>
</dbReference>
<dbReference type="GO" id="GO:0005344">
    <property type="term" value="F:oxygen carrier activity"/>
    <property type="evidence" value="ECO:0007669"/>
    <property type="project" value="UniProtKB-KW"/>
</dbReference>
<dbReference type="GO" id="GO:0071333">
    <property type="term" value="P:cellular response to glucose stimulus"/>
    <property type="evidence" value="ECO:0000315"/>
    <property type="project" value="dictyBase"/>
</dbReference>
<dbReference type="GO" id="GO:0071500">
    <property type="term" value="P:cellular response to nitrosative stress"/>
    <property type="evidence" value="ECO:0000316"/>
    <property type="project" value="dictyBase"/>
</dbReference>
<dbReference type="GO" id="GO:0046210">
    <property type="term" value="P:nitric oxide catabolic process"/>
    <property type="evidence" value="ECO:0000318"/>
    <property type="project" value="GO_Central"/>
</dbReference>
<dbReference type="GO" id="GO:0009636">
    <property type="term" value="P:response to toxic substance"/>
    <property type="evidence" value="ECO:0007669"/>
    <property type="project" value="UniProtKB-KW"/>
</dbReference>
<dbReference type="CDD" id="cd06184">
    <property type="entry name" value="flavohem_like_fad_nad_binding"/>
    <property type="match status" value="1"/>
</dbReference>
<dbReference type="FunFam" id="1.10.490.10:FF:000003">
    <property type="entry name" value="Flavohemoprotein"/>
    <property type="match status" value="1"/>
</dbReference>
<dbReference type="FunFam" id="2.40.30.10:FF:000034">
    <property type="entry name" value="Flavohemoprotein"/>
    <property type="match status" value="1"/>
</dbReference>
<dbReference type="FunFam" id="3.40.50.80:FF:000010">
    <property type="entry name" value="Flavohemoprotein"/>
    <property type="match status" value="1"/>
</dbReference>
<dbReference type="Gene3D" id="1.10.490.10">
    <property type="entry name" value="Globins"/>
    <property type="match status" value="1"/>
</dbReference>
<dbReference type="Gene3D" id="3.40.50.80">
    <property type="entry name" value="Nucleotide-binding domain of ferredoxin-NADP reductase (FNR) module"/>
    <property type="match status" value="1"/>
</dbReference>
<dbReference type="Gene3D" id="2.40.30.10">
    <property type="entry name" value="Translation factors"/>
    <property type="match status" value="1"/>
</dbReference>
<dbReference type="InterPro" id="IPR008333">
    <property type="entry name" value="Cbr1-like_FAD-bd_dom"/>
</dbReference>
<dbReference type="InterPro" id="IPR017927">
    <property type="entry name" value="FAD-bd_FR_type"/>
</dbReference>
<dbReference type="InterPro" id="IPR001709">
    <property type="entry name" value="Flavoprot_Pyr_Nucl_cyt_Rdtase"/>
</dbReference>
<dbReference type="InterPro" id="IPR039261">
    <property type="entry name" value="FNR_nucleotide-bd"/>
</dbReference>
<dbReference type="InterPro" id="IPR000971">
    <property type="entry name" value="Globin"/>
</dbReference>
<dbReference type="InterPro" id="IPR009050">
    <property type="entry name" value="Globin-like_sf"/>
</dbReference>
<dbReference type="InterPro" id="IPR012292">
    <property type="entry name" value="Globin/Proto"/>
</dbReference>
<dbReference type="InterPro" id="IPR001433">
    <property type="entry name" value="OxRdtase_FAD/NAD-bd"/>
</dbReference>
<dbReference type="InterPro" id="IPR017938">
    <property type="entry name" value="Riboflavin_synthase-like_b-brl"/>
</dbReference>
<dbReference type="PANTHER" id="PTHR43396">
    <property type="entry name" value="FLAVOHEMOPROTEIN"/>
    <property type="match status" value="1"/>
</dbReference>
<dbReference type="PANTHER" id="PTHR43396:SF1">
    <property type="entry name" value="FLAVOHEMOPROTEIN B"/>
    <property type="match status" value="1"/>
</dbReference>
<dbReference type="Pfam" id="PF00970">
    <property type="entry name" value="FAD_binding_6"/>
    <property type="match status" value="1"/>
</dbReference>
<dbReference type="Pfam" id="PF00042">
    <property type="entry name" value="Globin"/>
    <property type="match status" value="1"/>
</dbReference>
<dbReference type="Pfam" id="PF00175">
    <property type="entry name" value="NAD_binding_1"/>
    <property type="match status" value="1"/>
</dbReference>
<dbReference type="PRINTS" id="PR00406">
    <property type="entry name" value="CYTB5RDTASE"/>
</dbReference>
<dbReference type="PRINTS" id="PR00371">
    <property type="entry name" value="FPNCR"/>
</dbReference>
<dbReference type="SUPFAM" id="SSF52343">
    <property type="entry name" value="Ferredoxin reductase-like, C-terminal NADP-linked domain"/>
    <property type="match status" value="1"/>
</dbReference>
<dbReference type="SUPFAM" id="SSF46458">
    <property type="entry name" value="Globin-like"/>
    <property type="match status" value="1"/>
</dbReference>
<dbReference type="SUPFAM" id="SSF63380">
    <property type="entry name" value="Riboflavin synthase domain-like"/>
    <property type="match status" value="1"/>
</dbReference>
<dbReference type="PROSITE" id="PS51384">
    <property type="entry name" value="FAD_FR"/>
    <property type="match status" value="1"/>
</dbReference>
<dbReference type="PROSITE" id="PS01033">
    <property type="entry name" value="GLOBIN"/>
    <property type="match status" value="1"/>
</dbReference>
<name>FHBB_DICDI</name>
<keyword id="KW-0963">Cytoplasm</keyword>
<keyword id="KW-0216">Detoxification</keyword>
<keyword id="KW-0274">FAD</keyword>
<keyword id="KW-0285">Flavoprotein</keyword>
<keyword id="KW-0349">Heme</keyword>
<keyword id="KW-0408">Iron</keyword>
<keyword id="KW-0479">Metal-binding</keyword>
<keyword id="KW-0520">NAD</keyword>
<keyword id="KW-0521">NADP</keyword>
<keyword id="KW-0560">Oxidoreductase</keyword>
<keyword id="KW-0561">Oxygen transport</keyword>
<keyword id="KW-1185">Reference proteome</keyword>
<keyword id="KW-0813">Transport</keyword>
<reference key="1">
    <citation type="journal article" date="2000" name="Cell Struct. Funct.">
        <title>Identification and characterization of two flavohemoglobin genes in Dictyostelium discoideum.</title>
        <authorList>
            <person name="Iijima M."/>
            <person name="Shimizu H."/>
            <person name="Tanaka Y."/>
            <person name="Urushihara H."/>
        </authorList>
    </citation>
    <scope>NUCLEOTIDE SEQUENCE [MRNA]</scope>
    <scope>FUNCTION</scope>
    <scope>DEVELOPMENTAL STAGE</scope>
    <scope>INDUCTION</scope>
    <source>
        <strain>AX3-1</strain>
    </source>
</reference>
<reference key="2">
    <citation type="journal article" date="2005" name="Nature">
        <title>The genome of the social amoeba Dictyostelium discoideum.</title>
        <authorList>
            <person name="Eichinger L."/>
            <person name="Pachebat J.A."/>
            <person name="Gloeckner G."/>
            <person name="Rajandream M.A."/>
            <person name="Sucgang R."/>
            <person name="Berriman M."/>
            <person name="Song J."/>
            <person name="Olsen R."/>
            <person name="Szafranski K."/>
            <person name="Xu Q."/>
            <person name="Tunggal B."/>
            <person name="Kummerfeld S."/>
            <person name="Madera M."/>
            <person name="Konfortov B.A."/>
            <person name="Rivero F."/>
            <person name="Bankier A.T."/>
            <person name="Lehmann R."/>
            <person name="Hamlin N."/>
            <person name="Davies R."/>
            <person name="Gaudet P."/>
            <person name="Fey P."/>
            <person name="Pilcher K."/>
            <person name="Chen G."/>
            <person name="Saunders D."/>
            <person name="Sodergren E.J."/>
            <person name="Davis P."/>
            <person name="Kerhornou A."/>
            <person name="Nie X."/>
            <person name="Hall N."/>
            <person name="Anjard C."/>
            <person name="Hemphill L."/>
            <person name="Bason N."/>
            <person name="Farbrother P."/>
            <person name="Desany B."/>
            <person name="Just E."/>
            <person name="Morio T."/>
            <person name="Rost R."/>
            <person name="Churcher C.M."/>
            <person name="Cooper J."/>
            <person name="Haydock S."/>
            <person name="van Driessche N."/>
            <person name="Cronin A."/>
            <person name="Goodhead I."/>
            <person name="Muzny D.M."/>
            <person name="Mourier T."/>
            <person name="Pain A."/>
            <person name="Lu M."/>
            <person name="Harper D."/>
            <person name="Lindsay R."/>
            <person name="Hauser H."/>
            <person name="James K.D."/>
            <person name="Quiles M."/>
            <person name="Madan Babu M."/>
            <person name="Saito T."/>
            <person name="Buchrieser C."/>
            <person name="Wardroper A."/>
            <person name="Felder M."/>
            <person name="Thangavelu M."/>
            <person name="Johnson D."/>
            <person name="Knights A."/>
            <person name="Loulseged H."/>
            <person name="Mungall K.L."/>
            <person name="Oliver K."/>
            <person name="Price C."/>
            <person name="Quail M.A."/>
            <person name="Urushihara H."/>
            <person name="Hernandez J."/>
            <person name="Rabbinowitsch E."/>
            <person name="Steffen D."/>
            <person name="Sanders M."/>
            <person name="Ma J."/>
            <person name="Kohara Y."/>
            <person name="Sharp S."/>
            <person name="Simmonds M.N."/>
            <person name="Spiegler S."/>
            <person name="Tivey A."/>
            <person name="Sugano S."/>
            <person name="White B."/>
            <person name="Walker D."/>
            <person name="Woodward J.R."/>
            <person name="Winckler T."/>
            <person name="Tanaka Y."/>
            <person name="Shaulsky G."/>
            <person name="Schleicher M."/>
            <person name="Weinstock G.M."/>
            <person name="Rosenthal A."/>
            <person name="Cox E.C."/>
            <person name="Chisholm R.L."/>
            <person name="Gibbs R.A."/>
            <person name="Loomis W.F."/>
            <person name="Platzer M."/>
            <person name="Kay R.R."/>
            <person name="Williams J.G."/>
            <person name="Dear P.H."/>
            <person name="Noegel A.A."/>
            <person name="Barrell B.G."/>
            <person name="Kuspa A."/>
        </authorList>
    </citation>
    <scope>NUCLEOTIDE SEQUENCE [LARGE SCALE GENOMIC DNA]</scope>
    <source>
        <strain>AX4</strain>
    </source>
</reference>
<reference key="3">
    <citation type="journal article" date="2006" name="Mol. Cell. Proteomics">
        <title>Proteomics fingerprinting of phagosome maturation and evidence for the role of a Galpha during uptake.</title>
        <authorList>
            <person name="Gotthardt D."/>
            <person name="Blancheteau V."/>
            <person name="Bosserhoff A."/>
            <person name="Ruppert T."/>
            <person name="Delorenzi M."/>
            <person name="Soldati T."/>
        </authorList>
    </citation>
    <scope>IDENTIFICATION BY MASS SPECTROMETRY [LARGE SCALE ANALYSIS]</scope>
    <source>
        <strain>AX2</strain>
    </source>
</reference>